<reference key="1">
    <citation type="journal article" date="2005" name="Science">
        <title>The transcriptional landscape of the mammalian genome.</title>
        <authorList>
            <person name="Carninci P."/>
            <person name="Kasukawa T."/>
            <person name="Katayama S."/>
            <person name="Gough J."/>
            <person name="Frith M.C."/>
            <person name="Maeda N."/>
            <person name="Oyama R."/>
            <person name="Ravasi T."/>
            <person name="Lenhard B."/>
            <person name="Wells C."/>
            <person name="Kodzius R."/>
            <person name="Shimokawa K."/>
            <person name="Bajic V.B."/>
            <person name="Brenner S.E."/>
            <person name="Batalov S."/>
            <person name="Forrest A.R."/>
            <person name="Zavolan M."/>
            <person name="Davis M.J."/>
            <person name="Wilming L.G."/>
            <person name="Aidinis V."/>
            <person name="Allen J.E."/>
            <person name="Ambesi-Impiombato A."/>
            <person name="Apweiler R."/>
            <person name="Aturaliya R.N."/>
            <person name="Bailey T.L."/>
            <person name="Bansal M."/>
            <person name="Baxter L."/>
            <person name="Beisel K.W."/>
            <person name="Bersano T."/>
            <person name="Bono H."/>
            <person name="Chalk A.M."/>
            <person name="Chiu K.P."/>
            <person name="Choudhary V."/>
            <person name="Christoffels A."/>
            <person name="Clutterbuck D.R."/>
            <person name="Crowe M.L."/>
            <person name="Dalla E."/>
            <person name="Dalrymple B.P."/>
            <person name="de Bono B."/>
            <person name="Della Gatta G."/>
            <person name="di Bernardo D."/>
            <person name="Down T."/>
            <person name="Engstrom P."/>
            <person name="Fagiolini M."/>
            <person name="Faulkner G."/>
            <person name="Fletcher C.F."/>
            <person name="Fukushima T."/>
            <person name="Furuno M."/>
            <person name="Futaki S."/>
            <person name="Gariboldi M."/>
            <person name="Georgii-Hemming P."/>
            <person name="Gingeras T.R."/>
            <person name="Gojobori T."/>
            <person name="Green R.E."/>
            <person name="Gustincich S."/>
            <person name="Harbers M."/>
            <person name="Hayashi Y."/>
            <person name="Hensch T.K."/>
            <person name="Hirokawa N."/>
            <person name="Hill D."/>
            <person name="Huminiecki L."/>
            <person name="Iacono M."/>
            <person name="Ikeo K."/>
            <person name="Iwama A."/>
            <person name="Ishikawa T."/>
            <person name="Jakt M."/>
            <person name="Kanapin A."/>
            <person name="Katoh M."/>
            <person name="Kawasawa Y."/>
            <person name="Kelso J."/>
            <person name="Kitamura H."/>
            <person name="Kitano H."/>
            <person name="Kollias G."/>
            <person name="Krishnan S.P."/>
            <person name="Kruger A."/>
            <person name="Kummerfeld S.K."/>
            <person name="Kurochkin I.V."/>
            <person name="Lareau L.F."/>
            <person name="Lazarevic D."/>
            <person name="Lipovich L."/>
            <person name="Liu J."/>
            <person name="Liuni S."/>
            <person name="McWilliam S."/>
            <person name="Madan Babu M."/>
            <person name="Madera M."/>
            <person name="Marchionni L."/>
            <person name="Matsuda H."/>
            <person name="Matsuzawa S."/>
            <person name="Miki H."/>
            <person name="Mignone F."/>
            <person name="Miyake S."/>
            <person name="Morris K."/>
            <person name="Mottagui-Tabar S."/>
            <person name="Mulder N."/>
            <person name="Nakano N."/>
            <person name="Nakauchi H."/>
            <person name="Ng P."/>
            <person name="Nilsson R."/>
            <person name="Nishiguchi S."/>
            <person name="Nishikawa S."/>
            <person name="Nori F."/>
            <person name="Ohara O."/>
            <person name="Okazaki Y."/>
            <person name="Orlando V."/>
            <person name="Pang K.C."/>
            <person name="Pavan W.J."/>
            <person name="Pavesi G."/>
            <person name="Pesole G."/>
            <person name="Petrovsky N."/>
            <person name="Piazza S."/>
            <person name="Reed J."/>
            <person name="Reid J.F."/>
            <person name="Ring B.Z."/>
            <person name="Ringwald M."/>
            <person name="Rost B."/>
            <person name="Ruan Y."/>
            <person name="Salzberg S.L."/>
            <person name="Sandelin A."/>
            <person name="Schneider C."/>
            <person name="Schoenbach C."/>
            <person name="Sekiguchi K."/>
            <person name="Semple C.A."/>
            <person name="Seno S."/>
            <person name="Sessa L."/>
            <person name="Sheng Y."/>
            <person name="Shibata Y."/>
            <person name="Shimada H."/>
            <person name="Shimada K."/>
            <person name="Silva D."/>
            <person name="Sinclair B."/>
            <person name="Sperling S."/>
            <person name="Stupka E."/>
            <person name="Sugiura K."/>
            <person name="Sultana R."/>
            <person name="Takenaka Y."/>
            <person name="Taki K."/>
            <person name="Tammoja K."/>
            <person name="Tan S.L."/>
            <person name="Tang S."/>
            <person name="Taylor M.S."/>
            <person name="Tegner J."/>
            <person name="Teichmann S.A."/>
            <person name="Ueda H.R."/>
            <person name="van Nimwegen E."/>
            <person name="Verardo R."/>
            <person name="Wei C.L."/>
            <person name="Yagi K."/>
            <person name="Yamanishi H."/>
            <person name="Zabarovsky E."/>
            <person name="Zhu S."/>
            <person name="Zimmer A."/>
            <person name="Hide W."/>
            <person name="Bult C."/>
            <person name="Grimmond S.M."/>
            <person name="Teasdale R.D."/>
            <person name="Liu E.T."/>
            <person name="Brusic V."/>
            <person name="Quackenbush J."/>
            <person name="Wahlestedt C."/>
            <person name="Mattick J.S."/>
            <person name="Hume D.A."/>
            <person name="Kai C."/>
            <person name="Sasaki D."/>
            <person name="Tomaru Y."/>
            <person name="Fukuda S."/>
            <person name="Kanamori-Katayama M."/>
            <person name="Suzuki M."/>
            <person name="Aoki J."/>
            <person name="Arakawa T."/>
            <person name="Iida J."/>
            <person name="Imamura K."/>
            <person name="Itoh M."/>
            <person name="Kato T."/>
            <person name="Kawaji H."/>
            <person name="Kawagashira N."/>
            <person name="Kawashima T."/>
            <person name="Kojima M."/>
            <person name="Kondo S."/>
            <person name="Konno H."/>
            <person name="Nakano K."/>
            <person name="Ninomiya N."/>
            <person name="Nishio T."/>
            <person name="Okada M."/>
            <person name="Plessy C."/>
            <person name="Shibata K."/>
            <person name="Shiraki T."/>
            <person name="Suzuki S."/>
            <person name="Tagami M."/>
            <person name="Waki K."/>
            <person name="Watahiki A."/>
            <person name="Okamura-Oho Y."/>
            <person name="Suzuki H."/>
            <person name="Kawai J."/>
            <person name="Hayashizaki Y."/>
        </authorList>
    </citation>
    <scope>NUCLEOTIDE SEQUENCE [LARGE SCALE MRNA]</scope>
    <source>
        <strain>C57BL/6J</strain>
        <tissue>Egg</tissue>
        <tissue>Head</tissue>
        <tissue>Mammary gland</tissue>
        <tissue>Skin</tissue>
        <tissue>Thymus</tissue>
    </source>
</reference>
<reference key="2">
    <citation type="journal article" date="2004" name="Genome Res.">
        <title>The status, quality, and expansion of the NIH full-length cDNA project: the Mammalian Gene Collection (MGC).</title>
        <authorList>
            <consortium name="The MGC Project Team"/>
        </authorList>
    </citation>
    <scope>NUCLEOTIDE SEQUENCE [LARGE SCALE MRNA]</scope>
    <source>
        <strain>FVB/N</strain>
        <tissue>Mammary tumor</tissue>
    </source>
</reference>
<reference key="3">
    <citation type="journal article" date="2010" name="Cell">
        <title>A tissue-specific atlas of mouse protein phosphorylation and expression.</title>
        <authorList>
            <person name="Huttlin E.L."/>
            <person name="Jedrychowski M.P."/>
            <person name="Elias J.E."/>
            <person name="Goswami T."/>
            <person name="Rad R."/>
            <person name="Beausoleil S.A."/>
            <person name="Villen J."/>
            <person name="Haas W."/>
            <person name="Sowa M.E."/>
            <person name="Gygi S.P."/>
        </authorList>
    </citation>
    <scope>IDENTIFICATION BY MASS SPECTROMETRY [LARGE SCALE ANALYSIS]</scope>
    <source>
        <tissue>Lung</tissue>
    </source>
</reference>
<reference key="4">
    <citation type="journal article" date="2012" name="Nat. Cell Biol.">
        <title>A ciliopathy complex at the transition zone protects the cilia as a privileged membrane domain.</title>
        <authorList>
            <person name="Chih B."/>
            <person name="Liu P."/>
            <person name="Chinn Y."/>
            <person name="Chalouni C."/>
            <person name="Komuves L.G."/>
            <person name="Hass P.E."/>
            <person name="Sandoval W."/>
            <person name="Peterson A.S."/>
        </authorList>
    </citation>
    <scope>IDENTIFICATION IN THE TECTONIC-LIKE COMPLEX</scope>
</reference>
<feature type="chain" id="PRO_0000247422" description="BTB/POZ domain-containing adapter for CUL3-mediated RhoA degradation protein 3">
    <location>
        <begin position="1"/>
        <end position="315"/>
    </location>
</feature>
<feature type="domain" description="BTB" evidence="5">
    <location>
        <begin position="32"/>
        <end position="100"/>
    </location>
</feature>
<feature type="region of interest" description="Disordered" evidence="6">
    <location>
        <begin position="269"/>
        <end position="294"/>
    </location>
</feature>
<feature type="short sequence motif" description="PCNA-binding" evidence="1">
    <location>
        <begin position="239"/>
        <end position="245"/>
    </location>
</feature>
<feature type="modified residue" description="N-acetylmethionine" evidence="4">
    <location>
        <position position="1"/>
    </location>
</feature>
<feature type="modified residue" description="Phosphoserine" evidence="4">
    <location>
        <position position="23"/>
    </location>
</feature>
<dbReference type="EMBL" id="AK028657">
    <property type="protein sequence ID" value="BAC26050.1"/>
    <property type="molecule type" value="mRNA"/>
</dbReference>
<dbReference type="EMBL" id="AK041516">
    <property type="protein sequence ID" value="BAC30969.1"/>
    <property type="molecule type" value="mRNA"/>
</dbReference>
<dbReference type="EMBL" id="AK145295">
    <property type="protein sequence ID" value="BAE26350.1"/>
    <property type="molecule type" value="mRNA"/>
</dbReference>
<dbReference type="EMBL" id="AK147714">
    <property type="protein sequence ID" value="BAE28090.1"/>
    <property type="molecule type" value="mRNA"/>
</dbReference>
<dbReference type="EMBL" id="AK161199">
    <property type="protein sequence ID" value="BAE36235.1"/>
    <property type="molecule type" value="mRNA"/>
</dbReference>
<dbReference type="EMBL" id="AK163351">
    <property type="protein sequence ID" value="BAE37313.1"/>
    <property type="molecule type" value="mRNA"/>
</dbReference>
<dbReference type="EMBL" id="AK166505">
    <property type="protein sequence ID" value="BAE38815.1"/>
    <property type="molecule type" value="mRNA"/>
</dbReference>
<dbReference type="EMBL" id="BC006935">
    <property type="protein sequence ID" value="AAH06935.1"/>
    <property type="molecule type" value="mRNA"/>
</dbReference>
<dbReference type="CCDS" id="CCDS19563.1"/>
<dbReference type="RefSeq" id="NP_001153413.1">
    <property type="nucleotide sequence ID" value="NM_001159941.1"/>
</dbReference>
<dbReference type="RefSeq" id="NP_080421.2">
    <property type="nucleotide sequence ID" value="NM_026145.4"/>
</dbReference>
<dbReference type="SMR" id="Q922M3"/>
<dbReference type="BioGRID" id="236914">
    <property type="interactions" value="4"/>
</dbReference>
<dbReference type="CORUM" id="Q922M3"/>
<dbReference type="FunCoup" id="Q922M3">
    <property type="interactions" value="2276"/>
</dbReference>
<dbReference type="IntAct" id="Q922M3">
    <property type="interactions" value="3"/>
</dbReference>
<dbReference type="MINT" id="Q922M3"/>
<dbReference type="STRING" id="10090.ENSMUSP00000001125"/>
<dbReference type="iPTMnet" id="Q922M3"/>
<dbReference type="PhosphoSitePlus" id="Q922M3"/>
<dbReference type="jPOST" id="Q922M3"/>
<dbReference type="PaxDb" id="10090-ENSMUSP00000001125"/>
<dbReference type="ProteomicsDB" id="277173"/>
<dbReference type="Pumba" id="Q922M3"/>
<dbReference type="Antibodypedia" id="2841">
    <property type="antibodies" value="118 antibodies from 18 providers"/>
</dbReference>
<dbReference type="DNASU" id="330171"/>
<dbReference type="Ensembl" id="ENSMUST00000102581.11">
    <property type="protein sequence ID" value="ENSMUSP00000099641.5"/>
    <property type="gene ID" value="ENSMUSG00000001098.16"/>
</dbReference>
<dbReference type="GeneID" id="330171"/>
<dbReference type="KEGG" id="mmu:330171"/>
<dbReference type="UCSC" id="uc008yzm.2">
    <property type="organism name" value="mouse"/>
</dbReference>
<dbReference type="AGR" id="MGI:2141207"/>
<dbReference type="CTD" id="83892"/>
<dbReference type="MGI" id="MGI:2141207">
    <property type="gene designation" value="Kctd10"/>
</dbReference>
<dbReference type="VEuPathDB" id="HostDB:ENSMUSG00000001098"/>
<dbReference type="eggNOG" id="KOG2716">
    <property type="taxonomic scope" value="Eukaryota"/>
</dbReference>
<dbReference type="GeneTree" id="ENSGT00950000183143"/>
<dbReference type="InParanoid" id="Q922M3"/>
<dbReference type="OrthoDB" id="2333377at2759"/>
<dbReference type="PhylomeDB" id="Q922M3"/>
<dbReference type="UniPathway" id="UPA00143"/>
<dbReference type="BioGRID-ORCS" id="330171">
    <property type="hits" value="9 hits in 79 CRISPR screens"/>
</dbReference>
<dbReference type="ChiTaRS" id="Kctd10">
    <property type="organism name" value="mouse"/>
</dbReference>
<dbReference type="PRO" id="PR:Q922M3"/>
<dbReference type="Proteomes" id="UP000000589">
    <property type="component" value="Chromosome 5"/>
</dbReference>
<dbReference type="RNAct" id="Q922M3">
    <property type="molecule type" value="protein"/>
</dbReference>
<dbReference type="Bgee" id="ENSMUSG00000001098">
    <property type="expression patterns" value="Expressed in right lung lobe and 269 other cell types or tissues"/>
</dbReference>
<dbReference type="ExpressionAtlas" id="Q922M3">
    <property type="expression patterns" value="baseline and differential"/>
</dbReference>
<dbReference type="GO" id="GO:0031463">
    <property type="term" value="C:Cul3-RING ubiquitin ligase complex"/>
    <property type="evidence" value="ECO:0000250"/>
    <property type="project" value="UniProtKB"/>
</dbReference>
<dbReference type="GO" id="GO:0036038">
    <property type="term" value="C:MKS complex"/>
    <property type="evidence" value="ECO:0000314"/>
    <property type="project" value="MGI"/>
</dbReference>
<dbReference type="GO" id="GO:0005634">
    <property type="term" value="C:nucleus"/>
    <property type="evidence" value="ECO:0007669"/>
    <property type="project" value="UniProtKB-SubCell"/>
</dbReference>
<dbReference type="GO" id="GO:0005112">
    <property type="term" value="F:Notch binding"/>
    <property type="evidence" value="ECO:0000266"/>
    <property type="project" value="MGI"/>
</dbReference>
<dbReference type="GO" id="GO:0001525">
    <property type="term" value="P:angiogenesis"/>
    <property type="evidence" value="ECO:0000315"/>
    <property type="project" value="MGI"/>
</dbReference>
<dbReference type="GO" id="GO:0007507">
    <property type="term" value="P:heart development"/>
    <property type="evidence" value="ECO:0000315"/>
    <property type="project" value="MGI"/>
</dbReference>
<dbReference type="GO" id="GO:0045746">
    <property type="term" value="P:negative regulation of Notch signaling pathway"/>
    <property type="evidence" value="ECO:0000315"/>
    <property type="project" value="MGI"/>
</dbReference>
<dbReference type="GO" id="GO:0043161">
    <property type="term" value="P:proteasome-mediated ubiquitin-dependent protein catabolic process"/>
    <property type="evidence" value="ECO:0000250"/>
    <property type="project" value="UniProtKB"/>
</dbReference>
<dbReference type="GO" id="GO:0051260">
    <property type="term" value="P:protein homooligomerization"/>
    <property type="evidence" value="ECO:0007669"/>
    <property type="project" value="InterPro"/>
</dbReference>
<dbReference type="GO" id="GO:0016567">
    <property type="term" value="P:protein ubiquitination"/>
    <property type="evidence" value="ECO:0000250"/>
    <property type="project" value="UniProtKB"/>
</dbReference>
<dbReference type="GO" id="GO:0006511">
    <property type="term" value="P:ubiquitin-dependent protein catabolic process"/>
    <property type="evidence" value="ECO:0000266"/>
    <property type="project" value="MGI"/>
</dbReference>
<dbReference type="CDD" id="cd18399">
    <property type="entry name" value="BTB_POZ_KCTD10_BACURD3"/>
    <property type="match status" value="1"/>
</dbReference>
<dbReference type="FunFam" id="3.30.710.10:FF:000013">
    <property type="entry name" value="BTB/POZ domain-containing adapter for CUL3-mediated RhoA degradation protein 3"/>
    <property type="match status" value="1"/>
</dbReference>
<dbReference type="Gene3D" id="3.30.710.10">
    <property type="entry name" value="Potassium Channel Kv1.1, Chain A"/>
    <property type="match status" value="1"/>
</dbReference>
<dbReference type="InterPro" id="IPR045068">
    <property type="entry name" value="BACURD1-3"/>
</dbReference>
<dbReference type="InterPro" id="IPR000210">
    <property type="entry name" value="BTB/POZ_dom"/>
</dbReference>
<dbReference type="InterPro" id="IPR011333">
    <property type="entry name" value="SKP1/BTB/POZ_sf"/>
</dbReference>
<dbReference type="InterPro" id="IPR003131">
    <property type="entry name" value="T1-type_BTB"/>
</dbReference>
<dbReference type="PANTHER" id="PTHR11145">
    <property type="entry name" value="BTB/POZ DOMAIN-CONTAINING ADAPTER FOR CUL3-MEDIATED RHOA DEGRADATION PROTEIN FAMILY MEMBER"/>
    <property type="match status" value="1"/>
</dbReference>
<dbReference type="PANTHER" id="PTHR11145:SF14">
    <property type="entry name" value="BTB_POZ DOMAIN-CONTAINING ADAPTER FOR CUL3-MEDIATED RHOA DEGRADATION PROTEIN 3"/>
    <property type="match status" value="1"/>
</dbReference>
<dbReference type="Pfam" id="PF02214">
    <property type="entry name" value="BTB_2"/>
    <property type="match status" value="1"/>
</dbReference>
<dbReference type="SMART" id="SM00225">
    <property type="entry name" value="BTB"/>
    <property type="match status" value="1"/>
</dbReference>
<dbReference type="SUPFAM" id="SSF54695">
    <property type="entry name" value="POZ domain"/>
    <property type="match status" value="1"/>
</dbReference>
<dbReference type="PROSITE" id="PS50097">
    <property type="entry name" value="BTB"/>
    <property type="match status" value="1"/>
</dbReference>
<protein>
    <recommendedName>
        <fullName>BTB/POZ domain-containing adapter for CUL3-mediated RhoA degradation protein 3</fullName>
        <shortName>mBACURD3</shortName>
    </recommendedName>
    <alternativeName>
        <fullName>BTB/POZ domain-containing protein KCTD10</fullName>
    </alternativeName>
</protein>
<organism>
    <name type="scientific">Mus musculus</name>
    <name type="common">Mouse</name>
    <dbReference type="NCBI Taxonomy" id="10090"/>
    <lineage>
        <taxon>Eukaryota</taxon>
        <taxon>Metazoa</taxon>
        <taxon>Chordata</taxon>
        <taxon>Craniata</taxon>
        <taxon>Vertebrata</taxon>
        <taxon>Euteleostomi</taxon>
        <taxon>Mammalia</taxon>
        <taxon>Eutheria</taxon>
        <taxon>Euarchontoglires</taxon>
        <taxon>Glires</taxon>
        <taxon>Rodentia</taxon>
        <taxon>Myomorpha</taxon>
        <taxon>Muroidea</taxon>
        <taxon>Muridae</taxon>
        <taxon>Murinae</taxon>
        <taxon>Mus</taxon>
        <taxon>Mus</taxon>
    </lineage>
</organism>
<keyword id="KW-0007">Acetylation</keyword>
<keyword id="KW-0539">Nucleus</keyword>
<keyword id="KW-0597">Phosphoprotein</keyword>
<keyword id="KW-1185">Reference proteome</keyword>
<keyword id="KW-0833">Ubl conjugation pathway</keyword>
<sequence>MEEMSGDSVVSSAVPAAATRTTSFKGASPSSKYVKLNVGGALYYTTMQTLTKQDTMLKAMFSGRMEVLTDSEGWILIDRCGKHFGTILNYLRDGGVPLPESRREIEELLAEAKYYLVQGLLEECQAALQNKDTYEPFCKVPVITSSKEEQRLIATSNKPAVKLLYNRSNNKYSYTSNSDDNMLKNIELFDKLSLRFNGRVLFIKDVIGDEICCWSFYGQGRKIAEVCCTSIVYATEKKQTKVEFPEARIYEETLNILLYEAQDGRGPDNALLEATGGAAGRSHHLDEDEERERERIERVRRIHIKRPDDRAHLHQ</sequence>
<comment type="function">
    <text evidence="3">Substrate-specific adapter of a BCR (BTB-CUL3-RBX1) E3 ubiquitin-protein ligase complex. The BCR(BACURD3) E3 ubiquitin ligase complex mediates the ubiquitination of target proteins, leading to their degradation by the proteasome (By similarity).</text>
</comment>
<comment type="pathway">
    <text evidence="4">Protein modification; protein ubiquitination.</text>
</comment>
<comment type="subunit">
    <text evidence="2 3 4 7">Homotetramer; forms a two-fold symmetric tetramer in solution. Interacts with CUL3; interaction is direct and forms a 5:5 heterodecamer (By similarity). Component of the BCR(BACURD3) E3 ubiquitin ligase complex, at least composed of CUL3, KCTD10/BACURD3 and RBX1 (By similarity). Interacts with DNA polymerase delta subunit 2/POLD2 (By similarity). Interacts with PCNA (By similarity). Associated with the tectonic-like complex (also named B9 complex); however as Kctd10 has not been identified in all tectonic-like complexes purifications it is unclear whether it is really part of the complex (PubMed:22179047).</text>
</comment>
<comment type="subcellular location">
    <subcellularLocation>
        <location evidence="4">Nucleus</location>
    </subcellularLocation>
</comment>
<comment type="similarity">
    <text evidence="8">Belongs to the BACURD family.</text>
</comment>
<evidence type="ECO:0000250" key="1"/>
<evidence type="ECO:0000250" key="2">
    <source>
        <dbReference type="UniProtKB" id="Q7TPL3"/>
    </source>
</evidence>
<evidence type="ECO:0000250" key="3">
    <source>
        <dbReference type="UniProtKB" id="Q8WZ19"/>
    </source>
</evidence>
<evidence type="ECO:0000250" key="4">
    <source>
        <dbReference type="UniProtKB" id="Q9H3F6"/>
    </source>
</evidence>
<evidence type="ECO:0000255" key="5">
    <source>
        <dbReference type="PROSITE-ProRule" id="PRU00037"/>
    </source>
</evidence>
<evidence type="ECO:0000256" key="6">
    <source>
        <dbReference type="SAM" id="MobiDB-lite"/>
    </source>
</evidence>
<evidence type="ECO:0000269" key="7">
    <source>
    </source>
</evidence>
<evidence type="ECO:0000305" key="8"/>
<proteinExistence type="evidence at protein level"/>
<gene>
    <name type="primary">Kctd10</name>
</gene>
<accession>Q922M3</accession>
<name>BACD3_MOUSE</name>